<feature type="chain" id="PRO_0000272008" description="Bacilliredoxin SA1345">
    <location>
        <begin position="1"/>
        <end position="145"/>
    </location>
</feature>
<organism>
    <name type="scientific">Staphylococcus aureus (strain N315)</name>
    <dbReference type="NCBI Taxonomy" id="158879"/>
    <lineage>
        <taxon>Bacteria</taxon>
        <taxon>Bacillati</taxon>
        <taxon>Bacillota</taxon>
        <taxon>Bacilli</taxon>
        <taxon>Bacillales</taxon>
        <taxon>Staphylococcaceae</taxon>
        <taxon>Staphylococcus</taxon>
    </lineage>
</organism>
<name>Y1345_STAAN</name>
<protein>
    <recommendedName>
        <fullName evidence="1">Bacilliredoxin SA1345</fullName>
    </recommendedName>
</protein>
<proteinExistence type="evidence at protein level"/>
<accession>Q7A5G0</accession>
<sequence length="145" mass="16221">MDMNFDLYMNGVVEQARNEIESAGYEQLTTAEDVDKVLKQDGTTLVMINSVCGCAGGIARPAASHALHYDVLPDRLVTVFAGQDKEATQRAREYFEGYAPSSPSFALVKDGKITEMIERHQIEGHDVMNVINQLQTLFNKYCEER</sequence>
<reference key="1">
    <citation type="journal article" date="2001" name="Lancet">
        <title>Whole genome sequencing of meticillin-resistant Staphylococcus aureus.</title>
        <authorList>
            <person name="Kuroda M."/>
            <person name="Ohta T."/>
            <person name="Uchiyama I."/>
            <person name="Baba T."/>
            <person name="Yuzawa H."/>
            <person name="Kobayashi I."/>
            <person name="Cui L."/>
            <person name="Oguchi A."/>
            <person name="Aoki K."/>
            <person name="Nagai Y."/>
            <person name="Lian J.-Q."/>
            <person name="Ito T."/>
            <person name="Kanamori M."/>
            <person name="Matsumaru H."/>
            <person name="Maruyama A."/>
            <person name="Murakami H."/>
            <person name="Hosoyama A."/>
            <person name="Mizutani-Ui Y."/>
            <person name="Takahashi N.K."/>
            <person name="Sawano T."/>
            <person name="Inoue R."/>
            <person name="Kaito C."/>
            <person name="Sekimizu K."/>
            <person name="Hirakawa H."/>
            <person name="Kuhara S."/>
            <person name="Goto S."/>
            <person name="Yabuzaki J."/>
            <person name="Kanehisa M."/>
            <person name="Yamashita A."/>
            <person name="Oshima K."/>
            <person name="Furuya K."/>
            <person name="Yoshino C."/>
            <person name="Shiba T."/>
            <person name="Hattori M."/>
            <person name="Ogasawara N."/>
            <person name="Hayashi H."/>
            <person name="Hiramatsu K."/>
        </authorList>
    </citation>
    <scope>NUCLEOTIDE SEQUENCE [LARGE SCALE GENOMIC DNA]</scope>
    <source>
        <strain>N315</strain>
    </source>
</reference>
<reference key="2">
    <citation type="submission" date="2007-10" db="UniProtKB">
        <title>Shotgun proteomic analysis of total and membrane protein extracts of S. aureus strain N315.</title>
        <authorList>
            <person name="Vaezzadeh A.R."/>
            <person name="Deshusses J."/>
            <person name="Lescuyer P."/>
            <person name="Hochstrasser D.F."/>
        </authorList>
    </citation>
    <scope>IDENTIFICATION BY MASS SPECTROMETRY [LARGE SCALE ANALYSIS]</scope>
    <source>
        <strain>N315</strain>
    </source>
</reference>
<comment type="similarity">
    <text evidence="1">Belongs to the bacilliredoxin family.</text>
</comment>
<evidence type="ECO:0000305" key="1"/>
<gene>
    <name type="ordered locus">SA1345</name>
</gene>
<dbReference type="EMBL" id="BA000018">
    <property type="protein sequence ID" value="BAB42607.1"/>
    <property type="molecule type" value="Genomic_DNA"/>
</dbReference>
<dbReference type="PIR" id="B89931">
    <property type="entry name" value="B89931"/>
</dbReference>
<dbReference type="SMR" id="Q7A5G0"/>
<dbReference type="EnsemblBacteria" id="BAB42607">
    <property type="protein sequence ID" value="BAB42607"/>
    <property type="gene ID" value="BAB42607"/>
</dbReference>
<dbReference type="KEGG" id="sau:SA1345"/>
<dbReference type="HOGENOM" id="CLU_132521_0_0_9"/>
<dbReference type="GO" id="GO:0045454">
    <property type="term" value="P:cell redox homeostasis"/>
    <property type="evidence" value="ECO:0000250"/>
    <property type="project" value="UniProtKB"/>
</dbReference>
<dbReference type="Gene3D" id="3.40.30.10">
    <property type="entry name" value="Glutaredoxin"/>
    <property type="match status" value="1"/>
</dbReference>
<dbReference type="InterPro" id="IPR009474">
    <property type="entry name" value="BrxB/BrxA"/>
</dbReference>
<dbReference type="NCBIfam" id="TIGR04191">
    <property type="entry name" value="YphP_YqiW"/>
    <property type="match status" value="1"/>
</dbReference>
<dbReference type="PANTHER" id="PTHR40052:SF1">
    <property type="entry name" value="BACILLIREDOXIN BRXB"/>
    <property type="match status" value="1"/>
</dbReference>
<dbReference type="PANTHER" id="PTHR40052">
    <property type="entry name" value="UPF0403 PROTEIN YQIW-RELATED"/>
    <property type="match status" value="1"/>
</dbReference>
<dbReference type="Pfam" id="PF06491">
    <property type="entry name" value="Disulph_isomer"/>
    <property type="match status" value="1"/>
</dbReference>